<comment type="function">
    <text evidence="1">Required for maturation of urease via the functional incorporation of the urease nickel metallocenter.</text>
</comment>
<comment type="subunit">
    <text evidence="1">UreD, UreF and UreG form a complex that acts as a GTP-hydrolysis-dependent molecular chaperone, activating the urease apoprotein by helping to assemble the nickel containing metallocenter of UreC. The UreE protein probably delivers the nickel.</text>
</comment>
<comment type="subcellular location">
    <subcellularLocation>
        <location evidence="1">Cytoplasm</location>
    </subcellularLocation>
</comment>
<comment type="similarity">
    <text evidence="1">Belongs to the UreF family.</text>
</comment>
<reference key="1">
    <citation type="submission" date="2007-06" db="EMBL/GenBank/DDBJ databases">
        <title>Complete sequence of Marinomonas sp. MWYL1.</title>
        <authorList>
            <consortium name="US DOE Joint Genome Institute"/>
            <person name="Copeland A."/>
            <person name="Lucas S."/>
            <person name="Lapidus A."/>
            <person name="Barry K."/>
            <person name="Glavina del Rio T."/>
            <person name="Dalin E."/>
            <person name="Tice H."/>
            <person name="Pitluck S."/>
            <person name="Kiss H."/>
            <person name="Brettin T."/>
            <person name="Bruce D."/>
            <person name="Detter J.C."/>
            <person name="Han C."/>
            <person name="Schmutz J."/>
            <person name="Larimer F."/>
            <person name="Land M."/>
            <person name="Hauser L."/>
            <person name="Kyrpides N."/>
            <person name="Kim E."/>
            <person name="Johnston A.W.B."/>
            <person name="Todd J.D."/>
            <person name="Rogers R."/>
            <person name="Wexler M."/>
            <person name="Bond P.L."/>
            <person name="Li Y."/>
            <person name="Richardson P."/>
        </authorList>
    </citation>
    <scope>NUCLEOTIDE SEQUENCE [LARGE SCALE GENOMIC DNA]</scope>
    <source>
        <strain>MWYL1</strain>
    </source>
</reference>
<protein>
    <recommendedName>
        <fullName evidence="1">Urease accessory protein UreF</fullName>
    </recommendedName>
</protein>
<name>UREF_MARMS</name>
<keyword id="KW-0143">Chaperone</keyword>
<keyword id="KW-0963">Cytoplasm</keyword>
<keyword id="KW-0996">Nickel insertion</keyword>
<gene>
    <name evidence="1" type="primary">ureF</name>
    <name type="ordered locus">Mmwyl1_0958</name>
</gene>
<accession>A6VTW0</accession>
<evidence type="ECO:0000255" key="1">
    <source>
        <dbReference type="HAMAP-Rule" id="MF_01385"/>
    </source>
</evidence>
<dbReference type="EMBL" id="CP000749">
    <property type="protein sequence ID" value="ABR69889.1"/>
    <property type="molecule type" value="Genomic_DNA"/>
</dbReference>
<dbReference type="SMR" id="A6VTW0"/>
<dbReference type="STRING" id="400668.Mmwyl1_0958"/>
<dbReference type="KEGG" id="mmw:Mmwyl1_0958"/>
<dbReference type="eggNOG" id="COG0830">
    <property type="taxonomic scope" value="Bacteria"/>
</dbReference>
<dbReference type="HOGENOM" id="CLU_049215_2_1_6"/>
<dbReference type="OrthoDB" id="9798772at2"/>
<dbReference type="GO" id="GO:0005737">
    <property type="term" value="C:cytoplasm"/>
    <property type="evidence" value="ECO:0007669"/>
    <property type="project" value="UniProtKB-SubCell"/>
</dbReference>
<dbReference type="GO" id="GO:0016151">
    <property type="term" value="F:nickel cation binding"/>
    <property type="evidence" value="ECO:0007669"/>
    <property type="project" value="UniProtKB-UniRule"/>
</dbReference>
<dbReference type="Gene3D" id="1.10.4190.10">
    <property type="entry name" value="Urease accessory protein UreF"/>
    <property type="match status" value="1"/>
</dbReference>
<dbReference type="HAMAP" id="MF_01385">
    <property type="entry name" value="UreF"/>
    <property type="match status" value="1"/>
</dbReference>
<dbReference type="InterPro" id="IPR002639">
    <property type="entry name" value="UreF"/>
</dbReference>
<dbReference type="InterPro" id="IPR038277">
    <property type="entry name" value="UreF_sf"/>
</dbReference>
<dbReference type="PANTHER" id="PTHR33620">
    <property type="entry name" value="UREASE ACCESSORY PROTEIN F"/>
    <property type="match status" value="1"/>
</dbReference>
<dbReference type="PANTHER" id="PTHR33620:SF1">
    <property type="entry name" value="UREASE ACCESSORY PROTEIN F"/>
    <property type="match status" value="1"/>
</dbReference>
<dbReference type="Pfam" id="PF01730">
    <property type="entry name" value="UreF"/>
    <property type="match status" value="1"/>
</dbReference>
<dbReference type="PIRSF" id="PIRSF009467">
    <property type="entry name" value="Ureas_acces_UreF"/>
    <property type="match status" value="1"/>
</dbReference>
<proteinExistence type="inferred from homology"/>
<sequence length="230" mass="25622">MDTVTTNIVTTDIRLLRLLQLSSVGLPVGGFAFSQGMEYAIDQGWVKNKTEVSDWIGLQLQQSLARVDLPVLRLCMDAAKQQNTERLFELNDLVLACRETKELRLNDTAMGEALFRLMSSLQIDTPFKRLDEMSFVTLFAIAANHWGLQVDLACLGFAWSWLENQIAAATKLVPLGQTQAQELLGELQTDIRHAIAMSLNIEEERVGAGLPAIAIASALHETQYSRLFRS</sequence>
<feature type="chain" id="PRO_0000344131" description="Urease accessory protein UreF">
    <location>
        <begin position="1"/>
        <end position="230"/>
    </location>
</feature>
<organism>
    <name type="scientific">Marinomonas sp. (strain MWYL1)</name>
    <dbReference type="NCBI Taxonomy" id="400668"/>
    <lineage>
        <taxon>Bacteria</taxon>
        <taxon>Pseudomonadati</taxon>
        <taxon>Pseudomonadota</taxon>
        <taxon>Gammaproteobacteria</taxon>
        <taxon>Oceanospirillales</taxon>
        <taxon>Oceanospirillaceae</taxon>
        <taxon>Marinomonas</taxon>
    </lineage>
</organism>